<gene>
    <name type="primary">kae1</name>
    <name type="ORF">AFUA_6G04510</name>
</gene>
<proteinExistence type="inferred from homology"/>
<dbReference type="EC" id="2.3.1.234" evidence="1"/>
<dbReference type="EMBL" id="AAHF01000012">
    <property type="protein sequence ID" value="EAL85589.1"/>
    <property type="molecule type" value="Genomic_DNA"/>
</dbReference>
<dbReference type="RefSeq" id="XP_747627.1">
    <property type="nucleotide sequence ID" value="XM_742534.1"/>
</dbReference>
<dbReference type="SMR" id="Q4WDE9"/>
<dbReference type="FunCoup" id="Q4WDE9">
    <property type="interactions" value="593"/>
</dbReference>
<dbReference type="STRING" id="330879.Q4WDE9"/>
<dbReference type="EnsemblFungi" id="EAL85589">
    <property type="protein sequence ID" value="EAL85589"/>
    <property type="gene ID" value="AFUA_6G04510"/>
</dbReference>
<dbReference type="GeneID" id="3505228"/>
<dbReference type="KEGG" id="afm:AFUA_6G04510"/>
<dbReference type="VEuPathDB" id="FungiDB:Afu6g04510"/>
<dbReference type="eggNOG" id="KOG2708">
    <property type="taxonomic scope" value="Eukaryota"/>
</dbReference>
<dbReference type="HOGENOM" id="CLU_023208_2_2_1"/>
<dbReference type="InParanoid" id="Q4WDE9"/>
<dbReference type="OMA" id="HHRSWVV"/>
<dbReference type="OrthoDB" id="10254073at2759"/>
<dbReference type="Proteomes" id="UP000002530">
    <property type="component" value="Chromosome 6"/>
</dbReference>
<dbReference type="GO" id="GO:0000785">
    <property type="term" value="C:chromatin"/>
    <property type="evidence" value="ECO:0007669"/>
    <property type="project" value="EnsemblFungi"/>
</dbReference>
<dbReference type="GO" id="GO:0005737">
    <property type="term" value="C:cytoplasm"/>
    <property type="evidence" value="ECO:0000318"/>
    <property type="project" value="GO_Central"/>
</dbReference>
<dbReference type="GO" id="GO:0000408">
    <property type="term" value="C:EKC/KEOPS complex"/>
    <property type="evidence" value="ECO:0000318"/>
    <property type="project" value="GO_Central"/>
</dbReference>
<dbReference type="GO" id="GO:0005634">
    <property type="term" value="C:nucleus"/>
    <property type="evidence" value="ECO:0007669"/>
    <property type="project" value="UniProtKB-SubCell"/>
</dbReference>
<dbReference type="GO" id="GO:0031490">
    <property type="term" value="F:chromatin DNA binding"/>
    <property type="evidence" value="ECO:0007669"/>
    <property type="project" value="EnsemblFungi"/>
</dbReference>
<dbReference type="GO" id="GO:0046872">
    <property type="term" value="F:metal ion binding"/>
    <property type="evidence" value="ECO:0007669"/>
    <property type="project" value="UniProtKB-KW"/>
</dbReference>
<dbReference type="GO" id="GO:0061711">
    <property type="term" value="F:N(6)-L-threonylcarbamoyladenine synthase activity"/>
    <property type="evidence" value="ECO:0007669"/>
    <property type="project" value="UniProtKB-EC"/>
</dbReference>
<dbReference type="GO" id="GO:0008252">
    <property type="term" value="F:nucleotidase activity"/>
    <property type="evidence" value="ECO:0007669"/>
    <property type="project" value="EnsemblFungi"/>
</dbReference>
<dbReference type="GO" id="GO:0045944">
    <property type="term" value="P:positive regulation of transcription by RNA polymerase II"/>
    <property type="evidence" value="ECO:0007669"/>
    <property type="project" value="EnsemblFungi"/>
</dbReference>
<dbReference type="GO" id="GO:0000722">
    <property type="term" value="P:telomere maintenance via recombination"/>
    <property type="evidence" value="ECO:0007669"/>
    <property type="project" value="EnsemblFungi"/>
</dbReference>
<dbReference type="GO" id="GO:0002949">
    <property type="term" value="P:tRNA threonylcarbamoyladenosine modification"/>
    <property type="evidence" value="ECO:0007669"/>
    <property type="project" value="UniProtKB-UniRule"/>
</dbReference>
<dbReference type="CDD" id="cd24132">
    <property type="entry name" value="ASKHA_NBD_OSGEP_like_euk"/>
    <property type="match status" value="1"/>
</dbReference>
<dbReference type="FunFam" id="3.30.420.40:FF:000038">
    <property type="entry name" value="Probable tRNA N6-adenosine threonylcarbamoyltransferase"/>
    <property type="match status" value="1"/>
</dbReference>
<dbReference type="FunFam" id="3.30.420.40:FF:000295">
    <property type="entry name" value="Probable tRNA N6-adenosine threonylcarbamoyltransferase"/>
    <property type="match status" value="1"/>
</dbReference>
<dbReference type="Gene3D" id="3.30.420.40">
    <property type="match status" value="2"/>
</dbReference>
<dbReference type="HAMAP" id="MF_01446">
    <property type="entry name" value="Kae1"/>
    <property type="match status" value="1"/>
</dbReference>
<dbReference type="InterPro" id="IPR043129">
    <property type="entry name" value="ATPase_NBD"/>
</dbReference>
<dbReference type="InterPro" id="IPR000905">
    <property type="entry name" value="Gcp-like_dom"/>
</dbReference>
<dbReference type="InterPro" id="IPR017861">
    <property type="entry name" value="KAE1/TsaD"/>
</dbReference>
<dbReference type="InterPro" id="IPR034680">
    <property type="entry name" value="Kae1_archaea_euk"/>
</dbReference>
<dbReference type="NCBIfam" id="TIGR03722">
    <property type="entry name" value="arch_KAE1"/>
    <property type="match status" value="1"/>
</dbReference>
<dbReference type="NCBIfam" id="TIGR00329">
    <property type="entry name" value="gcp_kae1"/>
    <property type="match status" value="1"/>
</dbReference>
<dbReference type="PANTHER" id="PTHR11735">
    <property type="entry name" value="TRNA N6-ADENOSINE THREONYLCARBAMOYLTRANSFERASE"/>
    <property type="match status" value="1"/>
</dbReference>
<dbReference type="PANTHER" id="PTHR11735:SF14">
    <property type="entry name" value="TRNA N6-ADENOSINE THREONYLCARBAMOYLTRANSFERASE"/>
    <property type="match status" value="1"/>
</dbReference>
<dbReference type="Pfam" id="PF00814">
    <property type="entry name" value="TsaD"/>
    <property type="match status" value="1"/>
</dbReference>
<dbReference type="PRINTS" id="PR00789">
    <property type="entry name" value="OSIALOPTASE"/>
</dbReference>
<dbReference type="SUPFAM" id="SSF53067">
    <property type="entry name" value="Actin-like ATPase domain"/>
    <property type="match status" value="1"/>
</dbReference>
<keyword id="KW-0010">Activator</keyword>
<keyword id="KW-0012">Acyltransferase</keyword>
<keyword id="KW-0963">Cytoplasm</keyword>
<keyword id="KW-0479">Metal-binding</keyword>
<keyword id="KW-0539">Nucleus</keyword>
<keyword id="KW-1185">Reference proteome</keyword>
<keyword id="KW-0804">Transcription</keyword>
<keyword id="KW-0805">Transcription regulation</keyword>
<keyword id="KW-0808">Transferase</keyword>
<keyword id="KW-0819">tRNA processing</keyword>
<comment type="function">
    <text evidence="1">Component of the EKC/KEOPS complex that is required for the formation of a threonylcarbamoyl group on adenosine at position 37 (t(6)A37) in tRNAs that read codons beginning with adenine. The complex is probably involved in the transfer of the threonylcarbamoyl moiety of threonylcarbamoyl-AMP (TC-AMP) to the N6 group of A37. Kae1 likely plays a direct catalytic role in this reaction, but requires other protein(s) of the complex to fulfill this activity. The EKC/KEOPS complex also promotes both telomere uncapping and telomere elongation. The complex is required for efficient recruitment of transcriptional coactivators.</text>
</comment>
<comment type="catalytic activity">
    <reaction evidence="1">
        <text>L-threonylcarbamoyladenylate + adenosine(37) in tRNA = N(6)-L-threonylcarbamoyladenosine(37) in tRNA + AMP + H(+)</text>
        <dbReference type="Rhea" id="RHEA:37059"/>
        <dbReference type="Rhea" id="RHEA-COMP:10162"/>
        <dbReference type="Rhea" id="RHEA-COMP:10163"/>
        <dbReference type="ChEBI" id="CHEBI:15378"/>
        <dbReference type="ChEBI" id="CHEBI:73682"/>
        <dbReference type="ChEBI" id="CHEBI:74411"/>
        <dbReference type="ChEBI" id="CHEBI:74418"/>
        <dbReference type="ChEBI" id="CHEBI:456215"/>
        <dbReference type="EC" id="2.3.1.234"/>
    </reaction>
</comment>
<comment type="cofactor">
    <cofactor evidence="1">
        <name>a divalent metal cation</name>
        <dbReference type="ChEBI" id="CHEBI:60240"/>
    </cofactor>
    <text evidence="1">Binds 1 divalent metal cation per subunit.</text>
</comment>
<comment type="subunit">
    <text evidence="1">Component of the EKC/KEOPS complex composed of at least bud32, cgi121, gon7, kae1 and pcc1; the whole complex dimerizes.</text>
</comment>
<comment type="subcellular location">
    <subcellularLocation>
        <location evidence="1">Cytoplasm</location>
    </subcellularLocation>
    <subcellularLocation>
        <location evidence="1">Nucleus</location>
    </subcellularLocation>
</comment>
<comment type="similarity">
    <text evidence="1">Belongs to the KAE1 / TsaD family.</text>
</comment>
<evidence type="ECO:0000255" key="1">
    <source>
        <dbReference type="HAMAP-Rule" id="MF_03180"/>
    </source>
</evidence>
<name>KAE1_ASPFU</name>
<accession>Q4WDE9</accession>
<feature type="chain" id="PRO_0000278926" description="tRNA N6-adenosine threonylcarbamoyltransferase">
    <location>
        <begin position="1"/>
        <end position="352"/>
    </location>
</feature>
<feature type="binding site" evidence="1">
    <location>
        <position position="114"/>
    </location>
    <ligand>
        <name>a divalent metal cation</name>
        <dbReference type="ChEBI" id="CHEBI:60240"/>
    </ligand>
</feature>
<feature type="binding site" evidence="1">
    <location>
        <position position="118"/>
    </location>
    <ligand>
        <name>a divalent metal cation</name>
        <dbReference type="ChEBI" id="CHEBI:60240"/>
    </ligand>
</feature>
<feature type="binding site" evidence="1">
    <location>
        <begin position="135"/>
        <end position="139"/>
    </location>
    <ligand>
        <name>substrate</name>
    </ligand>
</feature>
<feature type="binding site" evidence="1">
    <location>
        <position position="135"/>
    </location>
    <ligand>
        <name>a divalent metal cation</name>
        <dbReference type="ChEBI" id="CHEBI:60240"/>
    </ligand>
</feature>
<feature type="binding site" evidence="1">
    <location>
        <position position="167"/>
    </location>
    <ligand>
        <name>substrate</name>
    </ligand>
</feature>
<feature type="binding site" evidence="1">
    <location>
        <position position="182"/>
    </location>
    <ligand>
        <name>substrate</name>
    </ligand>
</feature>
<feature type="binding site" evidence="1">
    <location>
        <position position="186"/>
    </location>
    <ligand>
        <name>substrate</name>
    </ligand>
</feature>
<feature type="binding site" evidence="1">
    <location>
        <position position="283"/>
    </location>
    <ligand>
        <name>substrate</name>
    </ligand>
</feature>
<feature type="binding site" evidence="1">
    <location>
        <position position="311"/>
    </location>
    <ligand>
        <name>a divalent metal cation</name>
        <dbReference type="ChEBI" id="CHEBI:60240"/>
    </ligand>
</feature>
<sequence length="352" mass="38273">MIAIGLEGSANKLGVGIMLHPEDGSTPRVLANIRHTYVSPPGEGFLPKDTARHHRSWVVKLVKRALREARISVRDVDCICFTKGPGMGAPLQSVAVAARMLSLLWGKELVGVNHCVGHIEMGRLITGSTNPVVLYVSGGNTQVIAYSSQRYRIFGETLDIAVGNCLDRFARTLHISNDPAPGYNIEQLAKKGKQLVDLPYTVKGMDCSFSGILAAIDGLAASYGLNGEEKEEEGAGDDSKPTRADLCFSLQETVFSMLVEITERAMAHVGSKEVLIVGGVGCNERLQEMMGIMARDRGGSVHATDERFCIDNGIMIAQAGLLAYKTGFRTPLKESTCTQRFRTDDVFVKWRD</sequence>
<organism>
    <name type="scientific">Aspergillus fumigatus (strain ATCC MYA-4609 / CBS 101355 / FGSC A1100 / Af293)</name>
    <name type="common">Neosartorya fumigata</name>
    <dbReference type="NCBI Taxonomy" id="330879"/>
    <lineage>
        <taxon>Eukaryota</taxon>
        <taxon>Fungi</taxon>
        <taxon>Dikarya</taxon>
        <taxon>Ascomycota</taxon>
        <taxon>Pezizomycotina</taxon>
        <taxon>Eurotiomycetes</taxon>
        <taxon>Eurotiomycetidae</taxon>
        <taxon>Eurotiales</taxon>
        <taxon>Aspergillaceae</taxon>
        <taxon>Aspergillus</taxon>
        <taxon>Aspergillus subgen. Fumigati</taxon>
    </lineage>
</organism>
<protein>
    <recommendedName>
        <fullName evidence="1">tRNA N6-adenosine threonylcarbamoyltransferase</fullName>
        <ecNumber evidence="1">2.3.1.234</ecNumber>
    </recommendedName>
    <alternativeName>
        <fullName>N6-L-threonylcarbamoyladenine synthase</fullName>
        <shortName>t(6)A synthase</shortName>
    </alternativeName>
    <alternativeName>
        <fullName evidence="1">t(6)A37 threonylcarbamoyladenosine biosynthesis protein kae1</fullName>
    </alternativeName>
    <alternativeName>
        <fullName evidence="1">tRNA threonylcarbamoyladenosine biosynthesis protein kae1</fullName>
    </alternativeName>
</protein>
<reference key="1">
    <citation type="journal article" date="2005" name="Nature">
        <title>Genomic sequence of the pathogenic and allergenic filamentous fungus Aspergillus fumigatus.</title>
        <authorList>
            <person name="Nierman W.C."/>
            <person name="Pain A."/>
            <person name="Anderson M.J."/>
            <person name="Wortman J.R."/>
            <person name="Kim H.S."/>
            <person name="Arroyo J."/>
            <person name="Berriman M."/>
            <person name="Abe K."/>
            <person name="Archer D.B."/>
            <person name="Bermejo C."/>
            <person name="Bennett J.W."/>
            <person name="Bowyer P."/>
            <person name="Chen D."/>
            <person name="Collins M."/>
            <person name="Coulsen R."/>
            <person name="Davies R."/>
            <person name="Dyer P.S."/>
            <person name="Farman M.L."/>
            <person name="Fedorova N."/>
            <person name="Fedorova N.D."/>
            <person name="Feldblyum T.V."/>
            <person name="Fischer R."/>
            <person name="Fosker N."/>
            <person name="Fraser A."/>
            <person name="Garcia J.L."/>
            <person name="Garcia M.J."/>
            <person name="Goble A."/>
            <person name="Goldman G.H."/>
            <person name="Gomi K."/>
            <person name="Griffith-Jones S."/>
            <person name="Gwilliam R."/>
            <person name="Haas B.J."/>
            <person name="Haas H."/>
            <person name="Harris D.E."/>
            <person name="Horiuchi H."/>
            <person name="Huang J."/>
            <person name="Humphray S."/>
            <person name="Jimenez J."/>
            <person name="Keller N."/>
            <person name="Khouri H."/>
            <person name="Kitamoto K."/>
            <person name="Kobayashi T."/>
            <person name="Konzack S."/>
            <person name="Kulkarni R."/>
            <person name="Kumagai T."/>
            <person name="Lafton A."/>
            <person name="Latge J.-P."/>
            <person name="Li W."/>
            <person name="Lord A."/>
            <person name="Lu C."/>
            <person name="Majoros W.H."/>
            <person name="May G.S."/>
            <person name="Miller B.L."/>
            <person name="Mohamoud Y."/>
            <person name="Molina M."/>
            <person name="Monod M."/>
            <person name="Mouyna I."/>
            <person name="Mulligan S."/>
            <person name="Murphy L.D."/>
            <person name="O'Neil S."/>
            <person name="Paulsen I."/>
            <person name="Penalva M.A."/>
            <person name="Pertea M."/>
            <person name="Price C."/>
            <person name="Pritchard B.L."/>
            <person name="Quail M.A."/>
            <person name="Rabbinowitsch E."/>
            <person name="Rawlins N."/>
            <person name="Rajandream M.A."/>
            <person name="Reichard U."/>
            <person name="Renauld H."/>
            <person name="Robson G.D."/>
            <person name="Rodriguez de Cordoba S."/>
            <person name="Rodriguez-Pena J.M."/>
            <person name="Ronning C.M."/>
            <person name="Rutter S."/>
            <person name="Salzberg S.L."/>
            <person name="Sanchez M."/>
            <person name="Sanchez-Ferrero J.C."/>
            <person name="Saunders D."/>
            <person name="Seeger K."/>
            <person name="Squares R."/>
            <person name="Squares S."/>
            <person name="Takeuchi M."/>
            <person name="Tekaia F."/>
            <person name="Turner G."/>
            <person name="Vazquez de Aldana C.R."/>
            <person name="Weidman J."/>
            <person name="White O."/>
            <person name="Woodward J.R."/>
            <person name="Yu J.-H."/>
            <person name="Fraser C.M."/>
            <person name="Galagan J.E."/>
            <person name="Asai K."/>
            <person name="Machida M."/>
            <person name="Hall N."/>
            <person name="Barrell B.G."/>
            <person name="Denning D.W."/>
        </authorList>
    </citation>
    <scope>NUCLEOTIDE SEQUENCE [LARGE SCALE GENOMIC DNA]</scope>
    <source>
        <strain>ATCC MYA-4609 / CBS 101355 / FGSC A1100 / Af293</strain>
    </source>
</reference>